<dbReference type="EC" id="2.7.1.130" evidence="1"/>
<dbReference type="EMBL" id="CP000614">
    <property type="protein sequence ID" value="ABO55630.1"/>
    <property type="molecule type" value="Genomic_DNA"/>
</dbReference>
<dbReference type="SMR" id="A4JH77"/>
<dbReference type="KEGG" id="bvi:Bcep1808_2638"/>
<dbReference type="eggNOG" id="COG1663">
    <property type="taxonomic scope" value="Bacteria"/>
</dbReference>
<dbReference type="HOGENOM" id="CLU_038816_2_0_4"/>
<dbReference type="UniPathway" id="UPA00359">
    <property type="reaction ID" value="UER00482"/>
</dbReference>
<dbReference type="Proteomes" id="UP000002287">
    <property type="component" value="Chromosome 1"/>
</dbReference>
<dbReference type="GO" id="GO:0005886">
    <property type="term" value="C:plasma membrane"/>
    <property type="evidence" value="ECO:0007669"/>
    <property type="project" value="TreeGrafter"/>
</dbReference>
<dbReference type="GO" id="GO:0005524">
    <property type="term" value="F:ATP binding"/>
    <property type="evidence" value="ECO:0007669"/>
    <property type="project" value="UniProtKB-UniRule"/>
</dbReference>
<dbReference type="GO" id="GO:0009029">
    <property type="term" value="F:tetraacyldisaccharide 4'-kinase activity"/>
    <property type="evidence" value="ECO:0007669"/>
    <property type="project" value="UniProtKB-UniRule"/>
</dbReference>
<dbReference type="GO" id="GO:0009245">
    <property type="term" value="P:lipid A biosynthetic process"/>
    <property type="evidence" value="ECO:0007669"/>
    <property type="project" value="UniProtKB-UniRule"/>
</dbReference>
<dbReference type="GO" id="GO:0009244">
    <property type="term" value="P:lipopolysaccharide core region biosynthetic process"/>
    <property type="evidence" value="ECO:0007669"/>
    <property type="project" value="TreeGrafter"/>
</dbReference>
<dbReference type="HAMAP" id="MF_00409">
    <property type="entry name" value="LpxK"/>
    <property type="match status" value="1"/>
</dbReference>
<dbReference type="InterPro" id="IPR003758">
    <property type="entry name" value="LpxK"/>
</dbReference>
<dbReference type="InterPro" id="IPR027417">
    <property type="entry name" value="P-loop_NTPase"/>
</dbReference>
<dbReference type="NCBIfam" id="TIGR00682">
    <property type="entry name" value="lpxK"/>
    <property type="match status" value="1"/>
</dbReference>
<dbReference type="PANTHER" id="PTHR42724">
    <property type="entry name" value="TETRAACYLDISACCHARIDE 4'-KINASE"/>
    <property type="match status" value="1"/>
</dbReference>
<dbReference type="PANTHER" id="PTHR42724:SF1">
    <property type="entry name" value="TETRAACYLDISACCHARIDE 4'-KINASE, MITOCHONDRIAL-RELATED"/>
    <property type="match status" value="1"/>
</dbReference>
<dbReference type="Pfam" id="PF02606">
    <property type="entry name" value="LpxK"/>
    <property type="match status" value="1"/>
</dbReference>
<dbReference type="SUPFAM" id="SSF52540">
    <property type="entry name" value="P-loop containing nucleoside triphosphate hydrolases"/>
    <property type="match status" value="1"/>
</dbReference>
<name>LPXK_BURVG</name>
<protein>
    <recommendedName>
        <fullName evidence="1">Tetraacyldisaccharide 4'-kinase</fullName>
        <ecNumber evidence="1">2.7.1.130</ecNumber>
    </recommendedName>
    <alternativeName>
        <fullName evidence="1">Lipid A 4'-kinase</fullName>
    </alternativeName>
</protein>
<keyword id="KW-0067">ATP-binding</keyword>
<keyword id="KW-0418">Kinase</keyword>
<keyword id="KW-0441">Lipid A biosynthesis</keyword>
<keyword id="KW-0444">Lipid biosynthesis</keyword>
<keyword id="KW-0443">Lipid metabolism</keyword>
<keyword id="KW-0547">Nucleotide-binding</keyword>
<keyword id="KW-0808">Transferase</keyword>
<feature type="chain" id="PRO_1000049890" description="Tetraacyldisaccharide 4'-kinase">
    <location>
        <begin position="1"/>
        <end position="342"/>
    </location>
</feature>
<feature type="binding site" evidence="1">
    <location>
        <begin position="68"/>
        <end position="75"/>
    </location>
    <ligand>
        <name>ATP</name>
        <dbReference type="ChEBI" id="CHEBI:30616"/>
    </ligand>
</feature>
<proteinExistence type="inferred from homology"/>
<gene>
    <name evidence="1" type="primary">lpxK</name>
    <name type="ordered locus">Bcep1808_2638</name>
</gene>
<sequence>MSARGGPLARLEARITREWQRRGALAWALTPFACVFGLCAALRRTAYTQGWKQPVDVGVPVVVVGNVTVGGTGKTPTVIALVDALRAAGFTPGVVSRGYGANVQAPTAVTAASRASAAGDEPLLIARRTGAPVWVCPDRVAAAQALRAAHPEVDVIVSDDGLQHYRLARTVELVVFDHRLGGNGFLLPAGPLREPLSRHRDATLVNDPYSGALPPWPDTYALALTPGAAWHLDQPTLRRPLSQFANERVLAAAGIGAPERFFATLRAAGLAPATRALPDHYAFADNPFVDDAVDAILITEKDAVKLGASWRDARLWVVPVEAALDPRLIALVVEKLRGRSPA</sequence>
<accession>A4JH77</accession>
<comment type="function">
    <text evidence="1">Transfers the gamma-phosphate of ATP to the 4'-position of a tetraacyldisaccharide 1-phosphate intermediate (termed DS-1-P) to form tetraacyldisaccharide 1,4'-bis-phosphate (lipid IVA).</text>
</comment>
<comment type="catalytic activity">
    <reaction evidence="1">
        <text>a lipid A disaccharide + ATP = a lipid IVA + ADP + H(+)</text>
        <dbReference type="Rhea" id="RHEA:67840"/>
        <dbReference type="ChEBI" id="CHEBI:15378"/>
        <dbReference type="ChEBI" id="CHEBI:30616"/>
        <dbReference type="ChEBI" id="CHEBI:176343"/>
        <dbReference type="ChEBI" id="CHEBI:176425"/>
        <dbReference type="ChEBI" id="CHEBI:456216"/>
        <dbReference type="EC" id="2.7.1.130"/>
    </reaction>
</comment>
<comment type="pathway">
    <text evidence="1">Glycolipid biosynthesis; lipid IV(A) biosynthesis; lipid IV(A) from (3R)-3-hydroxytetradecanoyl-[acyl-carrier-protein] and UDP-N-acetyl-alpha-D-glucosamine: step 6/6.</text>
</comment>
<comment type="similarity">
    <text evidence="1">Belongs to the LpxK family.</text>
</comment>
<organism>
    <name type="scientific">Burkholderia vietnamiensis (strain G4 / LMG 22486)</name>
    <name type="common">Burkholderia cepacia (strain R1808)</name>
    <dbReference type="NCBI Taxonomy" id="269482"/>
    <lineage>
        <taxon>Bacteria</taxon>
        <taxon>Pseudomonadati</taxon>
        <taxon>Pseudomonadota</taxon>
        <taxon>Betaproteobacteria</taxon>
        <taxon>Burkholderiales</taxon>
        <taxon>Burkholderiaceae</taxon>
        <taxon>Burkholderia</taxon>
        <taxon>Burkholderia cepacia complex</taxon>
    </lineage>
</organism>
<reference key="1">
    <citation type="submission" date="2007-03" db="EMBL/GenBank/DDBJ databases">
        <title>Complete sequence of chromosome 1 of Burkholderia vietnamiensis G4.</title>
        <authorList>
            <consortium name="US DOE Joint Genome Institute"/>
            <person name="Copeland A."/>
            <person name="Lucas S."/>
            <person name="Lapidus A."/>
            <person name="Barry K."/>
            <person name="Detter J.C."/>
            <person name="Glavina del Rio T."/>
            <person name="Hammon N."/>
            <person name="Israni S."/>
            <person name="Dalin E."/>
            <person name="Tice H."/>
            <person name="Pitluck S."/>
            <person name="Chain P."/>
            <person name="Malfatti S."/>
            <person name="Shin M."/>
            <person name="Vergez L."/>
            <person name="Schmutz J."/>
            <person name="Larimer F."/>
            <person name="Land M."/>
            <person name="Hauser L."/>
            <person name="Kyrpides N."/>
            <person name="Tiedje J."/>
            <person name="Richardson P."/>
        </authorList>
    </citation>
    <scope>NUCLEOTIDE SEQUENCE [LARGE SCALE GENOMIC DNA]</scope>
    <source>
        <strain>G4 / LMG 22486</strain>
    </source>
</reference>
<evidence type="ECO:0000255" key="1">
    <source>
        <dbReference type="HAMAP-Rule" id="MF_00409"/>
    </source>
</evidence>